<proteinExistence type="inferred from homology"/>
<comment type="catalytic activity">
    <reaction evidence="1">
        <text>D-arabinose 5-phosphate + phosphoenolpyruvate + H2O = 3-deoxy-alpha-D-manno-2-octulosonate-8-phosphate + phosphate</text>
        <dbReference type="Rhea" id="RHEA:14053"/>
        <dbReference type="ChEBI" id="CHEBI:15377"/>
        <dbReference type="ChEBI" id="CHEBI:43474"/>
        <dbReference type="ChEBI" id="CHEBI:57693"/>
        <dbReference type="ChEBI" id="CHEBI:58702"/>
        <dbReference type="ChEBI" id="CHEBI:85985"/>
        <dbReference type="EC" id="2.5.1.55"/>
    </reaction>
</comment>
<comment type="pathway">
    <text evidence="1">Carbohydrate biosynthesis; 3-deoxy-D-manno-octulosonate biosynthesis; 3-deoxy-D-manno-octulosonate from D-ribulose 5-phosphate: step 2/3.</text>
</comment>
<comment type="pathway">
    <text evidence="1">Bacterial outer membrane biogenesis; lipopolysaccharide biosynthesis.</text>
</comment>
<comment type="subcellular location">
    <subcellularLocation>
        <location evidence="1">Cytoplasm</location>
    </subcellularLocation>
</comment>
<comment type="similarity">
    <text evidence="1">Belongs to the KdsA family.</text>
</comment>
<organism>
    <name type="scientific">Shewanella baltica (strain OS223)</name>
    <dbReference type="NCBI Taxonomy" id="407976"/>
    <lineage>
        <taxon>Bacteria</taxon>
        <taxon>Pseudomonadati</taxon>
        <taxon>Pseudomonadota</taxon>
        <taxon>Gammaproteobacteria</taxon>
        <taxon>Alteromonadales</taxon>
        <taxon>Shewanellaceae</taxon>
        <taxon>Shewanella</taxon>
    </lineage>
</organism>
<name>KDSA_SHEB2</name>
<reference key="1">
    <citation type="submission" date="2008-12" db="EMBL/GenBank/DDBJ databases">
        <title>Complete sequence of chromosome of Shewanella baltica OS223.</title>
        <authorList>
            <consortium name="US DOE Joint Genome Institute"/>
            <person name="Lucas S."/>
            <person name="Copeland A."/>
            <person name="Lapidus A."/>
            <person name="Glavina del Rio T."/>
            <person name="Dalin E."/>
            <person name="Tice H."/>
            <person name="Bruce D."/>
            <person name="Goodwin L."/>
            <person name="Pitluck S."/>
            <person name="Chertkov O."/>
            <person name="Meincke L."/>
            <person name="Brettin T."/>
            <person name="Detter J.C."/>
            <person name="Han C."/>
            <person name="Kuske C.R."/>
            <person name="Larimer F."/>
            <person name="Land M."/>
            <person name="Hauser L."/>
            <person name="Kyrpides N."/>
            <person name="Ovchinnikova G."/>
            <person name="Brettar I."/>
            <person name="Rodrigues J."/>
            <person name="Konstantinidis K."/>
            <person name="Tiedje J."/>
        </authorList>
    </citation>
    <scope>NUCLEOTIDE SEQUENCE [LARGE SCALE GENOMIC DNA]</scope>
    <source>
        <strain>OS223</strain>
    </source>
</reference>
<protein>
    <recommendedName>
        <fullName evidence="1">2-dehydro-3-deoxyphosphooctonate aldolase</fullName>
        <ecNumber evidence="1">2.5.1.55</ecNumber>
    </recommendedName>
    <alternativeName>
        <fullName evidence="1">3-deoxy-D-manno-octulosonic acid 8-phosphate synthase</fullName>
    </alternativeName>
    <alternativeName>
        <fullName evidence="1">KDO-8-phosphate synthase</fullName>
        <shortName evidence="1">KDO 8-P synthase</shortName>
        <shortName evidence="1">KDOPS</shortName>
    </alternativeName>
    <alternativeName>
        <fullName evidence="1">Phospho-2-dehydro-3-deoxyoctonate aldolase</fullName>
    </alternativeName>
</protein>
<gene>
    <name evidence="1" type="primary">kdsA</name>
    <name type="ordered locus">Sbal223_3540</name>
</gene>
<dbReference type="EC" id="2.5.1.55" evidence="1"/>
<dbReference type="EMBL" id="CP001252">
    <property type="protein sequence ID" value="ACK48022.1"/>
    <property type="molecule type" value="Genomic_DNA"/>
</dbReference>
<dbReference type="RefSeq" id="WP_006080266.1">
    <property type="nucleotide sequence ID" value="NC_011663.1"/>
</dbReference>
<dbReference type="SMR" id="B8E809"/>
<dbReference type="GeneID" id="11773752"/>
<dbReference type="KEGG" id="sbp:Sbal223_3540"/>
<dbReference type="HOGENOM" id="CLU_036666_0_0_6"/>
<dbReference type="UniPathway" id="UPA00030"/>
<dbReference type="UniPathway" id="UPA00357">
    <property type="reaction ID" value="UER00474"/>
</dbReference>
<dbReference type="Proteomes" id="UP000002507">
    <property type="component" value="Chromosome"/>
</dbReference>
<dbReference type="GO" id="GO:0005737">
    <property type="term" value="C:cytoplasm"/>
    <property type="evidence" value="ECO:0007669"/>
    <property type="project" value="UniProtKB-SubCell"/>
</dbReference>
<dbReference type="GO" id="GO:0008676">
    <property type="term" value="F:3-deoxy-8-phosphooctulonate synthase activity"/>
    <property type="evidence" value="ECO:0007669"/>
    <property type="project" value="UniProtKB-UniRule"/>
</dbReference>
<dbReference type="GO" id="GO:0019294">
    <property type="term" value="P:keto-3-deoxy-D-manno-octulosonic acid biosynthetic process"/>
    <property type="evidence" value="ECO:0007669"/>
    <property type="project" value="UniProtKB-UniRule"/>
</dbReference>
<dbReference type="Gene3D" id="3.20.20.70">
    <property type="entry name" value="Aldolase class I"/>
    <property type="match status" value="1"/>
</dbReference>
<dbReference type="HAMAP" id="MF_00056">
    <property type="entry name" value="KDO8P_synth"/>
    <property type="match status" value="1"/>
</dbReference>
<dbReference type="InterPro" id="IPR013785">
    <property type="entry name" value="Aldolase_TIM"/>
</dbReference>
<dbReference type="InterPro" id="IPR006218">
    <property type="entry name" value="DAHP1/KDSA"/>
</dbReference>
<dbReference type="InterPro" id="IPR006269">
    <property type="entry name" value="KDO8P_synthase"/>
</dbReference>
<dbReference type="NCBIfam" id="TIGR01362">
    <property type="entry name" value="KDO8P_synth"/>
    <property type="match status" value="1"/>
</dbReference>
<dbReference type="NCBIfam" id="NF003543">
    <property type="entry name" value="PRK05198.1"/>
    <property type="match status" value="1"/>
</dbReference>
<dbReference type="NCBIfam" id="NF009109">
    <property type="entry name" value="PRK12457.1"/>
    <property type="match status" value="1"/>
</dbReference>
<dbReference type="PANTHER" id="PTHR21057">
    <property type="entry name" value="PHOSPHO-2-DEHYDRO-3-DEOXYHEPTONATE ALDOLASE"/>
    <property type="match status" value="1"/>
</dbReference>
<dbReference type="Pfam" id="PF00793">
    <property type="entry name" value="DAHP_synth_1"/>
    <property type="match status" value="1"/>
</dbReference>
<dbReference type="SUPFAM" id="SSF51569">
    <property type="entry name" value="Aldolase"/>
    <property type="match status" value="1"/>
</dbReference>
<keyword id="KW-0963">Cytoplasm</keyword>
<keyword id="KW-0448">Lipopolysaccharide biosynthesis</keyword>
<keyword id="KW-0808">Transferase</keyword>
<evidence type="ECO:0000255" key="1">
    <source>
        <dbReference type="HAMAP-Rule" id="MF_00056"/>
    </source>
</evidence>
<feature type="chain" id="PRO_1000117788" description="2-dehydro-3-deoxyphosphooctonate aldolase">
    <location>
        <begin position="1"/>
        <end position="282"/>
    </location>
</feature>
<sequence>MSNKIINLGSIEIANDKPFVLFGGMNVLESRDLAMSIAETYAEVTQKLGIPYVFKASFDKANRSSINSYRGPGMEEGLKIFEEIKKTFNLPLITDVHEVHQCAPVAEVVDIIQLPAFLARQTDLVVAMAKTGAIINVKKPQFLAPHEMRHIITKFNEAGNDEIILCERGSSFGYNNLVVDMLGMDEMKQSGYPVIFDATHALQRPGGRADSAGGRRAQATELARSGMALGLAGLFIEAHPDPDNAKCDGPCALPLHQLENYLKQMKAIDDLVKSFEPIDTSK</sequence>
<accession>B8E809</accession>